<feature type="chain" id="PRO_0000204148" description="L-fucose isomerase">
    <location>
        <begin position="1"/>
        <end position="589"/>
    </location>
</feature>
<feature type="active site" description="Proton acceptor" evidence="1">
    <location>
        <position position="340"/>
    </location>
</feature>
<feature type="active site" description="Proton acceptor" evidence="1">
    <location>
        <position position="364"/>
    </location>
</feature>
<feature type="binding site" evidence="1">
    <location>
        <position position="340"/>
    </location>
    <ligand>
        <name>Mn(2+)</name>
        <dbReference type="ChEBI" id="CHEBI:29035"/>
    </ligand>
</feature>
<feature type="binding site" evidence="1">
    <location>
        <position position="364"/>
    </location>
    <ligand>
        <name>Mn(2+)</name>
        <dbReference type="ChEBI" id="CHEBI:29035"/>
    </ligand>
</feature>
<feature type="binding site" evidence="1">
    <location>
        <position position="527"/>
    </location>
    <ligand>
        <name>Mn(2+)</name>
        <dbReference type="ChEBI" id="CHEBI:29035"/>
    </ligand>
</feature>
<accession>P44779</accession>
<gene>
    <name evidence="1" type="primary">fucI</name>
    <name type="ordered locus">HI_0614</name>
</gene>
<dbReference type="EC" id="5.3.1.25" evidence="1"/>
<dbReference type="EMBL" id="L42023">
    <property type="protein sequence ID" value="AAC22273.1"/>
    <property type="status" value="ALT_INIT"/>
    <property type="molecule type" value="Genomic_DNA"/>
</dbReference>
<dbReference type="PIR" id="F64081">
    <property type="entry name" value="F64081"/>
</dbReference>
<dbReference type="RefSeq" id="NP_438772.2">
    <property type="nucleotide sequence ID" value="NC_000907.1"/>
</dbReference>
<dbReference type="SMR" id="P44779"/>
<dbReference type="STRING" id="71421.HI_0614"/>
<dbReference type="EnsemblBacteria" id="AAC22273">
    <property type="protein sequence ID" value="AAC22273"/>
    <property type="gene ID" value="HI_0614"/>
</dbReference>
<dbReference type="KEGG" id="hin:HI_0614"/>
<dbReference type="PATRIC" id="fig|71421.8.peg.638"/>
<dbReference type="eggNOG" id="COG2407">
    <property type="taxonomic scope" value="Bacteria"/>
</dbReference>
<dbReference type="HOGENOM" id="CLU_033326_1_0_6"/>
<dbReference type="OrthoDB" id="9760430at2"/>
<dbReference type="PhylomeDB" id="P44779"/>
<dbReference type="BioCyc" id="HINF71421:G1GJ1-635-MONOMER"/>
<dbReference type="UniPathway" id="UPA00563">
    <property type="reaction ID" value="UER00624"/>
</dbReference>
<dbReference type="Proteomes" id="UP000000579">
    <property type="component" value="Chromosome"/>
</dbReference>
<dbReference type="GO" id="GO:0005737">
    <property type="term" value="C:cytoplasm"/>
    <property type="evidence" value="ECO:0007669"/>
    <property type="project" value="UniProtKB-SubCell"/>
</dbReference>
<dbReference type="GO" id="GO:0008790">
    <property type="term" value="F:arabinose isomerase activity"/>
    <property type="evidence" value="ECO:0000318"/>
    <property type="project" value="GO_Central"/>
</dbReference>
<dbReference type="GO" id="GO:0008736">
    <property type="term" value="F:L-fucose isomerase activity"/>
    <property type="evidence" value="ECO:0000318"/>
    <property type="project" value="GO_Central"/>
</dbReference>
<dbReference type="GO" id="GO:0030145">
    <property type="term" value="F:manganese ion binding"/>
    <property type="evidence" value="ECO:0007669"/>
    <property type="project" value="UniProtKB-UniRule"/>
</dbReference>
<dbReference type="GO" id="GO:0019571">
    <property type="term" value="P:D-arabinose catabolic process"/>
    <property type="evidence" value="ECO:0000318"/>
    <property type="project" value="GO_Central"/>
</dbReference>
<dbReference type="GO" id="GO:0042355">
    <property type="term" value="P:L-fucose catabolic process"/>
    <property type="evidence" value="ECO:0000318"/>
    <property type="project" value="GO_Central"/>
</dbReference>
<dbReference type="FunFam" id="3.20.14.10:FF:000001">
    <property type="entry name" value="L-fucose isomerase"/>
    <property type="match status" value="1"/>
</dbReference>
<dbReference type="FunFam" id="3.40.50.1070:FF:000001">
    <property type="entry name" value="L-fucose isomerase"/>
    <property type="match status" value="1"/>
</dbReference>
<dbReference type="Gene3D" id="3.40.50.1070">
    <property type="match status" value="1"/>
</dbReference>
<dbReference type="Gene3D" id="3.40.275.10">
    <property type="entry name" value="L-fucose Isomerase, Chain A, domain 2"/>
    <property type="match status" value="1"/>
</dbReference>
<dbReference type="Gene3D" id="3.20.14.10">
    <property type="entry name" value="L-fucose/L-arabinose isomerase, C-terminal"/>
    <property type="match status" value="1"/>
</dbReference>
<dbReference type="HAMAP" id="MF_01254">
    <property type="entry name" value="Fucose_iso"/>
    <property type="match status" value="1"/>
</dbReference>
<dbReference type="InterPro" id="IPR004216">
    <property type="entry name" value="Fuc/Ara_isomerase_C"/>
</dbReference>
<dbReference type="InterPro" id="IPR038393">
    <property type="entry name" value="Fuc_iso_dom3_sf"/>
</dbReference>
<dbReference type="InterPro" id="IPR015888">
    <property type="entry name" value="Fuc_isomerase_C"/>
</dbReference>
<dbReference type="InterPro" id="IPR038391">
    <property type="entry name" value="Fucose_iso_dom1_sf"/>
</dbReference>
<dbReference type="InterPro" id="IPR012888">
    <property type="entry name" value="Fucose_iso_N1"/>
</dbReference>
<dbReference type="InterPro" id="IPR005763">
    <property type="entry name" value="Fucose_isomerase"/>
</dbReference>
<dbReference type="InterPro" id="IPR038392">
    <property type="entry name" value="Fucose_isomerase_dom2_sf"/>
</dbReference>
<dbReference type="InterPro" id="IPR009015">
    <property type="entry name" value="Fucose_isomerase_N/cen_sf"/>
</dbReference>
<dbReference type="InterPro" id="IPR012889">
    <property type="entry name" value="Fucose_isomerase_N2"/>
</dbReference>
<dbReference type="NCBIfam" id="TIGR01089">
    <property type="entry name" value="fucI"/>
    <property type="match status" value="1"/>
</dbReference>
<dbReference type="NCBIfam" id="NF008220">
    <property type="entry name" value="PRK10991.1"/>
    <property type="match status" value="1"/>
</dbReference>
<dbReference type="PANTHER" id="PTHR37840">
    <property type="entry name" value="L-FUCOSE ISOMERASE"/>
    <property type="match status" value="1"/>
</dbReference>
<dbReference type="PANTHER" id="PTHR37840:SF1">
    <property type="entry name" value="L-FUCOSE ISOMERASE"/>
    <property type="match status" value="1"/>
</dbReference>
<dbReference type="Pfam" id="PF02952">
    <property type="entry name" value="Fucose_iso_C"/>
    <property type="match status" value="1"/>
</dbReference>
<dbReference type="Pfam" id="PF07881">
    <property type="entry name" value="Fucose_iso_N1"/>
    <property type="match status" value="1"/>
</dbReference>
<dbReference type="Pfam" id="PF07882">
    <property type="entry name" value="Fucose_iso_N2"/>
    <property type="match status" value="1"/>
</dbReference>
<dbReference type="SUPFAM" id="SSF50443">
    <property type="entry name" value="FucI/AraA C-terminal domain-like"/>
    <property type="match status" value="1"/>
</dbReference>
<dbReference type="SUPFAM" id="SSF53743">
    <property type="entry name" value="FucI/AraA N-terminal and middle domains"/>
    <property type="match status" value="1"/>
</dbReference>
<sequence>MALATQSNRIKIGIRPTIDGRRMGVRESLETQTIRMAQSVAQLLQTHIRHTDGTFVECVVADSTIGGVAEAAACADKFKRENVGLTITVTPCWCYGSETIDMDPHMPKAIWGFNGTERPGAVYLAAALAGHSQLGLPAFSIYGTEVQEADDTNIPEDVKEKLLRFARAGLAVASIRGKSYLSIGSVSMGIAGSIVNQAFFQEYLGMRNEYVDMMEIKRRLDRKIYDQEEVDLALSWVKQYCKEGVDVNSLENQRNAEERAELWENVVKMTIITRDLMVGNPKLATLNYAEEALGHNAIAAGFQGQRHWTDHLPNGDFMEAMLNSTYDWNGVRPPYILATENDSLNAIGMLFGHQLTGKAQIFADVRTYWSQDSVERVTGWRPESGFIHLINSGSAALDGTGEHQDAQGNPTLKPAWDVTEEEAKRCLENTRWCPAVHEYFRGGGLSSQFLTKGGIPFTIHRINLIKGLGPVLQIAEGWSIDLPQDVHNKLNQRTNETWPTTWFVPRLTGKGAFTDVYSVMANWGANHCVATHGHVGADLITLASMLRIPVCMHNVSEKNIFRPSAWNGFGQDKEGQDYRACQNFGPLYK</sequence>
<comment type="function">
    <text evidence="1">Converts the aldose L-fucose into the corresponding ketose L-fuculose.</text>
</comment>
<comment type="catalytic activity">
    <reaction evidence="1">
        <text>L-fucose = L-fuculose</text>
        <dbReference type="Rhea" id="RHEA:17233"/>
        <dbReference type="ChEBI" id="CHEBI:2181"/>
        <dbReference type="ChEBI" id="CHEBI:17617"/>
        <dbReference type="EC" id="5.3.1.25"/>
    </reaction>
</comment>
<comment type="cofactor">
    <cofactor evidence="1">
        <name>Mn(2+)</name>
        <dbReference type="ChEBI" id="CHEBI:29035"/>
    </cofactor>
</comment>
<comment type="pathway">
    <text evidence="1">Carbohydrate degradation; L-fucose degradation; L-lactaldehyde and glycerone phosphate from L-fucose: step 1/3.</text>
</comment>
<comment type="subcellular location">
    <subcellularLocation>
        <location evidence="1">Cytoplasm</location>
    </subcellularLocation>
</comment>
<comment type="similarity">
    <text evidence="1">Belongs to the L-fucose isomerase family.</text>
</comment>
<comment type="sequence caution" evidence="2">
    <conflict type="erroneous initiation">
        <sequence resource="EMBL-CDS" id="AAC22273"/>
    </conflict>
</comment>
<name>FUCI_HAEIN</name>
<proteinExistence type="inferred from homology"/>
<evidence type="ECO:0000255" key="1">
    <source>
        <dbReference type="HAMAP-Rule" id="MF_01254"/>
    </source>
</evidence>
<evidence type="ECO:0000305" key="2"/>
<organism>
    <name type="scientific">Haemophilus influenzae (strain ATCC 51907 / DSM 11121 / KW20 / Rd)</name>
    <dbReference type="NCBI Taxonomy" id="71421"/>
    <lineage>
        <taxon>Bacteria</taxon>
        <taxon>Pseudomonadati</taxon>
        <taxon>Pseudomonadota</taxon>
        <taxon>Gammaproteobacteria</taxon>
        <taxon>Pasteurellales</taxon>
        <taxon>Pasteurellaceae</taxon>
        <taxon>Haemophilus</taxon>
    </lineage>
</organism>
<reference key="1">
    <citation type="journal article" date="1995" name="Science">
        <title>Whole-genome random sequencing and assembly of Haemophilus influenzae Rd.</title>
        <authorList>
            <person name="Fleischmann R.D."/>
            <person name="Adams M.D."/>
            <person name="White O."/>
            <person name="Clayton R.A."/>
            <person name="Kirkness E.F."/>
            <person name="Kerlavage A.R."/>
            <person name="Bult C.J."/>
            <person name="Tomb J.-F."/>
            <person name="Dougherty B.A."/>
            <person name="Merrick J.M."/>
            <person name="McKenney K."/>
            <person name="Sutton G.G."/>
            <person name="FitzHugh W."/>
            <person name="Fields C.A."/>
            <person name="Gocayne J.D."/>
            <person name="Scott J.D."/>
            <person name="Shirley R."/>
            <person name="Liu L.-I."/>
            <person name="Glodek A."/>
            <person name="Kelley J.M."/>
            <person name="Weidman J.F."/>
            <person name="Phillips C.A."/>
            <person name="Spriggs T."/>
            <person name="Hedblom E."/>
            <person name="Cotton M.D."/>
            <person name="Utterback T.R."/>
            <person name="Hanna M.C."/>
            <person name="Nguyen D.T."/>
            <person name="Saudek D.M."/>
            <person name="Brandon R.C."/>
            <person name="Fine L.D."/>
            <person name="Fritchman J.L."/>
            <person name="Fuhrmann J.L."/>
            <person name="Geoghagen N.S.M."/>
            <person name="Gnehm C.L."/>
            <person name="McDonald L.A."/>
            <person name="Small K.V."/>
            <person name="Fraser C.M."/>
            <person name="Smith H.O."/>
            <person name="Venter J.C."/>
        </authorList>
    </citation>
    <scope>NUCLEOTIDE SEQUENCE [LARGE SCALE GENOMIC DNA]</scope>
    <source>
        <strain>ATCC 51907 / DSM 11121 / KW20 / Rd</strain>
    </source>
</reference>
<keyword id="KW-0119">Carbohydrate metabolism</keyword>
<keyword id="KW-0963">Cytoplasm</keyword>
<keyword id="KW-0294">Fucose metabolism</keyword>
<keyword id="KW-0413">Isomerase</keyword>
<keyword id="KW-0464">Manganese</keyword>
<keyword id="KW-0479">Metal-binding</keyword>
<keyword id="KW-1185">Reference proteome</keyword>
<protein>
    <recommendedName>
        <fullName evidence="1">L-fucose isomerase</fullName>
        <ecNumber evidence="1">5.3.1.25</ecNumber>
    </recommendedName>
    <alternativeName>
        <fullName evidence="1">6-deoxy-L-galactose isomerase</fullName>
    </alternativeName>
    <alternativeName>
        <fullName>FucIase</fullName>
    </alternativeName>
</protein>